<sequence>MIAYIKGLLAADGPGWVVIDVNGIGYHVSIPSTTQLPALGHEVKLFTHMSVREDGIQFFGFAKEDEKECFLLLLNVAGVGPKVALAVVSHLPPSNLRSAIAIEDVNQLVKVPGVGKKTAQRILLELKDKLKGMAAVEHSTLQQSVITTGSGDEAVEALLALGYSQGEARDAVKKAQKSAPEEDLSALIKIALKELAPSR</sequence>
<organism>
    <name type="scientific">Desulforamulus reducens (strain ATCC BAA-1160 / DSM 100696 / MI-1)</name>
    <name type="common">Desulfotomaculum reducens</name>
    <dbReference type="NCBI Taxonomy" id="349161"/>
    <lineage>
        <taxon>Bacteria</taxon>
        <taxon>Bacillati</taxon>
        <taxon>Bacillota</taxon>
        <taxon>Clostridia</taxon>
        <taxon>Eubacteriales</taxon>
        <taxon>Peptococcaceae</taxon>
        <taxon>Desulforamulus</taxon>
    </lineage>
</organism>
<protein>
    <recommendedName>
        <fullName evidence="1">Holliday junction branch migration complex subunit RuvA</fullName>
    </recommendedName>
</protein>
<comment type="function">
    <text evidence="1">The RuvA-RuvB-RuvC complex processes Holliday junction (HJ) DNA during genetic recombination and DNA repair, while the RuvA-RuvB complex plays an important role in the rescue of blocked DNA replication forks via replication fork reversal (RFR). RuvA specifically binds to HJ cruciform DNA, conferring on it an open structure. The RuvB hexamer acts as an ATP-dependent pump, pulling dsDNA into and through the RuvAB complex. HJ branch migration allows RuvC to scan DNA until it finds its consensus sequence, where it cleaves and resolves the cruciform DNA.</text>
</comment>
<comment type="subunit">
    <text evidence="1">Homotetramer. Forms an RuvA(8)-RuvB(12)-Holliday junction (HJ) complex. HJ DNA is sandwiched between 2 RuvA tetramers; dsDNA enters through RuvA and exits via RuvB. An RuvB hexamer assembles on each DNA strand where it exits the tetramer. Each RuvB hexamer is contacted by two RuvA subunits (via domain III) on 2 adjacent RuvB subunits; this complex drives branch migration. In the full resolvosome a probable DNA-RuvA(4)-RuvB(12)-RuvC(2) complex forms which resolves the HJ.</text>
</comment>
<comment type="subcellular location">
    <subcellularLocation>
        <location evidence="1">Cytoplasm</location>
    </subcellularLocation>
</comment>
<comment type="domain">
    <text evidence="1">Has three domains with a flexible linker between the domains II and III and assumes an 'L' shape. Domain III is highly mobile and contacts RuvB.</text>
</comment>
<comment type="similarity">
    <text evidence="1">Belongs to the RuvA family.</text>
</comment>
<accession>A4J536</accession>
<feature type="chain" id="PRO_1000071016" description="Holliday junction branch migration complex subunit RuvA">
    <location>
        <begin position="1"/>
        <end position="199"/>
    </location>
</feature>
<feature type="region of interest" description="Domain I" evidence="1">
    <location>
        <begin position="1"/>
        <end position="62"/>
    </location>
</feature>
<feature type="region of interest" description="Domain II" evidence="1">
    <location>
        <begin position="63"/>
        <end position="141"/>
    </location>
</feature>
<feature type="region of interest" description="Flexible linker" evidence="1">
    <location>
        <begin position="142"/>
        <end position="152"/>
    </location>
</feature>
<feature type="region of interest" description="Domain III" evidence="1">
    <location>
        <begin position="152"/>
        <end position="199"/>
    </location>
</feature>
<proteinExistence type="inferred from homology"/>
<keyword id="KW-0963">Cytoplasm</keyword>
<keyword id="KW-0227">DNA damage</keyword>
<keyword id="KW-0233">DNA recombination</keyword>
<keyword id="KW-0234">DNA repair</keyword>
<keyword id="KW-0238">DNA-binding</keyword>
<keyword id="KW-1185">Reference proteome</keyword>
<name>RUVA_DESRM</name>
<evidence type="ECO:0000255" key="1">
    <source>
        <dbReference type="HAMAP-Rule" id="MF_00031"/>
    </source>
</evidence>
<gene>
    <name evidence="1" type="primary">ruvA</name>
    <name type="ordered locus">Dred_1661</name>
</gene>
<reference key="1">
    <citation type="submission" date="2007-03" db="EMBL/GenBank/DDBJ databases">
        <title>Complete sequence of Desulfotomaculum reducens MI-1.</title>
        <authorList>
            <consortium name="US DOE Joint Genome Institute"/>
            <person name="Copeland A."/>
            <person name="Lucas S."/>
            <person name="Lapidus A."/>
            <person name="Barry K."/>
            <person name="Detter J.C."/>
            <person name="Glavina del Rio T."/>
            <person name="Hammon N."/>
            <person name="Israni S."/>
            <person name="Dalin E."/>
            <person name="Tice H."/>
            <person name="Pitluck S."/>
            <person name="Sims D."/>
            <person name="Brettin T."/>
            <person name="Bruce D."/>
            <person name="Han C."/>
            <person name="Tapia R."/>
            <person name="Schmutz J."/>
            <person name="Larimer F."/>
            <person name="Land M."/>
            <person name="Hauser L."/>
            <person name="Kyrpides N."/>
            <person name="Kim E."/>
            <person name="Tebo B.M."/>
            <person name="Richardson P."/>
        </authorList>
    </citation>
    <scope>NUCLEOTIDE SEQUENCE [LARGE SCALE GENOMIC DNA]</scope>
    <source>
        <strain>ATCC BAA-1160 / DSM 100696 / MI-1</strain>
    </source>
</reference>
<dbReference type="EMBL" id="CP000612">
    <property type="protein sequence ID" value="ABO50189.1"/>
    <property type="molecule type" value="Genomic_DNA"/>
</dbReference>
<dbReference type="RefSeq" id="WP_011878004.1">
    <property type="nucleotide sequence ID" value="NC_009253.1"/>
</dbReference>
<dbReference type="SMR" id="A4J536"/>
<dbReference type="STRING" id="349161.Dred_1661"/>
<dbReference type="KEGG" id="drm:Dred_1661"/>
<dbReference type="eggNOG" id="COG0632">
    <property type="taxonomic scope" value="Bacteria"/>
</dbReference>
<dbReference type="HOGENOM" id="CLU_087936_3_0_9"/>
<dbReference type="OrthoDB" id="5293449at2"/>
<dbReference type="Proteomes" id="UP000001556">
    <property type="component" value="Chromosome"/>
</dbReference>
<dbReference type="GO" id="GO:0005737">
    <property type="term" value="C:cytoplasm"/>
    <property type="evidence" value="ECO:0007669"/>
    <property type="project" value="UniProtKB-SubCell"/>
</dbReference>
<dbReference type="GO" id="GO:0009379">
    <property type="term" value="C:Holliday junction helicase complex"/>
    <property type="evidence" value="ECO:0007669"/>
    <property type="project" value="InterPro"/>
</dbReference>
<dbReference type="GO" id="GO:0048476">
    <property type="term" value="C:Holliday junction resolvase complex"/>
    <property type="evidence" value="ECO:0007669"/>
    <property type="project" value="UniProtKB-UniRule"/>
</dbReference>
<dbReference type="GO" id="GO:0005524">
    <property type="term" value="F:ATP binding"/>
    <property type="evidence" value="ECO:0007669"/>
    <property type="project" value="InterPro"/>
</dbReference>
<dbReference type="GO" id="GO:0000400">
    <property type="term" value="F:four-way junction DNA binding"/>
    <property type="evidence" value="ECO:0007669"/>
    <property type="project" value="UniProtKB-UniRule"/>
</dbReference>
<dbReference type="GO" id="GO:0009378">
    <property type="term" value="F:four-way junction helicase activity"/>
    <property type="evidence" value="ECO:0007669"/>
    <property type="project" value="InterPro"/>
</dbReference>
<dbReference type="GO" id="GO:0006310">
    <property type="term" value="P:DNA recombination"/>
    <property type="evidence" value="ECO:0007669"/>
    <property type="project" value="UniProtKB-UniRule"/>
</dbReference>
<dbReference type="GO" id="GO:0006281">
    <property type="term" value="P:DNA repair"/>
    <property type="evidence" value="ECO:0007669"/>
    <property type="project" value="UniProtKB-UniRule"/>
</dbReference>
<dbReference type="CDD" id="cd14332">
    <property type="entry name" value="UBA_RuvA_C"/>
    <property type="match status" value="1"/>
</dbReference>
<dbReference type="Gene3D" id="1.10.150.20">
    <property type="entry name" value="5' to 3' exonuclease, C-terminal subdomain"/>
    <property type="match status" value="1"/>
</dbReference>
<dbReference type="Gene3D" id="1.10.8.10">
    <property type="entry name" value="DNA helicase RuvA subunit, C-terminal domain"/>
    <property type="match status" value="1"/>
</dbReference>
<dbReference type="Gene3D" id="2.40.50.140">
    <property type="entry name" value="Nucleic acid-binding proteins"/>
    <property type="match status" value="1"/>
</dbReference>
<dbReference type="HAMAP" id="MF_00031">
    <property type="entry name" value="DNA_HJ_migration_RuvA"/>
    <property type="match status" value="1"/>
</dbReference>
<dbReference type="InterPro" id="IPR013849">
    <property type="entry name" value="DNA_helicase_Holl-junc_RuvA_I"/>
</dbReference>
<dbReference type="InterPro" id="IPR003583">
    <property type="entry name" value="Hlx-hairpin-Hlx_DNA-bd_motif"/>
</dbReference>
<dbReference type="InterPro" id="IPR012340">
    <property type="entry name" value="NA-bd_OB-fold"/>
</dbReference>
<dbReference type="InterPro" id="IPR000085">
    <property type="entry name" value="RuvA"/>
</dbReference>
<dbReference type="InterPro" id="IPR010994">
    <property type="entry name" value="RuvA_2-like"/>
</dbReference>
<dbReference type="InterPro" id="IPR011114">
    <property type="entry name" value="RuvA_C"/>
</dbReference>
<dbReference type="InterPro" id="IPR036267">
    <property type="entry name" value="RuvA_C_sf"/>
</dbReference>
<dbReference type="NCBIfam" id="TIGR00084">
    <property type="entry name" value="ruvA"/>
    <property type="match status" value="1"/>
</dbReference>
<dbReference type="Pfam" id="PF14520">
    <property type="entry name" value="HHH_5"/>
    <property type="match status" value="1"/>
</dbReference>
<dbReference type="Pfam" id="PF07499">
    <property type="entry name" value="RuvA_C"/>
    <property type="match status" value="1"/>
</dbReference>
<dbReference type="Pfam" id="PF01330">
    <property type="entry name" value="RuvA_N"/>
    <property type="match status" value="1"/>
</dbReference>
<dbReference type="SMART" id="SM00278">
    <property type="entry name" value="HhH1"/>
    <property type="match status" value="2"/>
</dbReference>
<dbReference type="SUPFAM" id="SSF46929">
    <property type="entry name" value="DNA helicase RuvA subunit, C-terminal domain"/>
    <property type="match status" value="1"/>
</dbReference>
<dbReference type="SUPFAM" id="SSF50249">
    <property type="entry name" value="Nucleic acid-binding proteins"/>
    <property type="match status" value="1"/>
</dbReference>
<dbReference type="SUPFAM" id="SSF47781">
    <property type="entry name" value="RuvA domain 2-like"/>
    <property type="match status" value="1"/>
</dbReference>